<feature type="chain" id="PRO_0000091977" description="Energy-coupling factor transporter ATP-binding protein EcfA1">
    <location>
        <begin position="1"/>
        <end position="280"/>
    </location>
</feature>
<feature type="domain" description="ABC transporter" evidence="1">
    <location>
        <begin position="6"/>
        <end position="241"/>
    </location>
</feature>
<feature type="binding site" evidence="1">
    <location>
        <begin position="40"/>
        <end position="47"/>
    </location>
    <ligand>
        <name>ATP</name>
        <dbReference type="ChEBI" id="CHEBI:30616"/>
    </ligand>
</feature>
<comment type="function">
    <text evidence="1">ATP-binding (A) component of a common energy-coupling factor (ECF) ABC-transporter complex. Unlike classic ABC transporters this ECF transporter provides the energy necessary to transport a number of different substrates.</text>
</comment>
<comment type="subunit">
    <text evidence="1">Forms a stable energy-coupling factor (ECF) transporter complex composed of 2 membrane-embedded substrate-binding proteins (S component), 2 ATP-binding proteins (A component) and 2 transmembrane proteins (T component).</text>
</comment>
<comment type="subcellular location">
    <subcellularLocation>
        <location evidence="1">Cell membrane</location>
        <topology evidence="1">Peripheral membrane protein</topology>
    </subcellularLocation>
</comment>
<comment type="similarity">
    <text evidence="1">Belongs to the ABC transporter superfamily. Energy-coupling factor EcfA family.</text>
</comment>
<keyword id="KW-0067">ATP-binding</keyword>
<keyword id="KW-1003">Cell membrane</keyword>
<keyword id="KW-0472">Membrane</keyword>
<keyword id="KW-0547">Nucleotide-binding</keyword>
<keyword id="KW-1185">Reference proteome</keyword>
<keyword id="KW-1278">Translocase</keyword>
<keyword id="KW-0813">Transport</keyword>
<proteinExistence type="inferred from homology"/>
<reference key="1">
    <citation type="journal article" date="2003" name="Nature">
        <title>Genome sequence of Bacillus cereus and comparative analysis with Bacillus anthracis.</title>
        <authorList>
            <person name="Ivanova N."/>
            <person name="Sorokin A."/>
            <person name="Anderson I."/>
            <person name="Galleron N."/>
            <person name="Candelon B."/>
            <person name="Kapatral V."/>
            <person name="Bhattacharyya A."/>
            <person name="Reznik G."/>
            <person name="Mikhailova N."/>
            <person name="Lapidus A."/>
            <person name="Chu L."/>
            <person name="Mazur M."/>
            <person name="Goltsman E."/>
            <person name="Larsen N."/>
            <person name="D'Souza M."/>
            <person name="Walunas T."/>
            <person name="Grechkin Y."/>
            <person name="Pusch G."/>
            <person name="Haselkorn R."/>
            <person name="Fonstein M."/>
            <person name="Ehrlich S.D."/>
            <person name="Overbeek R."/>
            <person name="Kyrpides N.C."/>
        </authorList>
    </citation>
    <scope>NUCLEOTIDE SEQUENCE [LARGE SCALE GENOMIC DNA]</scope>
    <source>
        <strain>ATCC 14579 / DSM 31 / CCUG 7414 / JCM 2152 / NBRC 15305 / NCIMB 9373 / NCTC 2599 / NRRL B-3711</strain>
    </source>
</reference>
<sequence length="280" mass="31411">MKKEKLRIENISFQYPGAATYALKDVSFSLYEGEWVSIIGQNGSGKSTLAKLLNGLFLPEAGTITVNDTMVLSEETVWDVRKQIGMVFQNPDNQFVGTTVQDDVVFGLENIGMPREQMIERLEQALQLVRMEDFLNDEPHSLSGGQKQRVAIAGVLALQPSILILDEATSMLDPQGRREVVETVRQLVTQKGITVLSITHDLEEAAQSDRVIILNKGEILEEGTPEKIFKSSHMLQEIGLDVPFSVKIAELLKRNEILLQNTHLTMESLVNELWRLHSKK</sequence>
<dbReference type="EC" id="7.-.-.-" evidence="1"/>
<dbReference type="EMBL" id="AE016877">
    <property type="protein sequence ID" value="AAP07240.1"/>
    <property type="molecule type" value="Genomic_DNA"/>
</dbReference>
<dbReference type="RefSeq" id="NP_830039.1">
    <property type="nucleotide sequence ID" value="NC_004722.1"/>
</dbReference>
<dbReference type="RefSeq" id="WP_000711757.1">
    <property type="nucleotide sequence ID" value="NZ_CP138336.1"/>
</dbReference>
<dbReference type="SMR" id="Q81J16"/>
<dbReference type="STRING" id="226900.BC_0160"/>
<dbReference type="KEGG" id="bce:BC0160"/>
<dbReference type="PATRIC" id="fig|226900.8.peg.162"/>
<dbReference type="HOGENOM" id="CLU_000604_1_22_9"/>
<dbReference type="OrthoDB" id="9784332at2"/>
<dbReference type="Proteomes" id="UP000001417">
    <property type="component" value="Chromosome"/>
</dbReference>
<dbReference type="GO" id="GO:0043190">
    <property type="term" value="C:ATP-binding cassette (ABC) transporter complex"/>
    <property type="evidence" value="ECO:0000318"/>
    <property type="project" value="GO_Central"/>
</dbReference>
<dbReference type="GO" id="GO:0005524">
    <property type="term" value="F:ATP binding"/>
    <property type="evidence" value="ECO:0000318"/>
    <property type="project" value="GO_Central"/>
</dbReference>
<dbReference type="GO" id="GO:0016887">
    <property type="term" value="F:ATP hydrolysis activity"/>
    <property type="evidence" value="ECO:0007669"/>
    <property type="project" value="InterPro"/>
</dbReference>
<dbReference type="GO" id="GO:0042626">
    <property type="term" value="F:ATPase-coupled transmembrane transporter activity"/>
    <property type="evidence" value="ECO:0000318"/>
    <property type="project" value="GO_Central"/>
</dbReference>
<dbReference type="CDD" id="cd03225">
    <property type="entry name" value="ABC_cobalt_CbiO_domain1"/>
    <property type="match status" value="1"/>
</dbReference>
<dbReference type="FunFam" id="3.40.50.300:FF:000224">
    <property type="entry name" value="Energy-coupling factor transporter ATP-binding protein EcfA"/>
    <property type="match status" value="1"/>
</dbReference>
<dbReference type="Gene3D" id="3.40.50.300">
    <property type="entry name" value="P-loop containing nucleotide triphosphate hydrolases"/>
    <property type="match status" value="1"/>
</dbReference>
<dbReference type="InterPro" id="IPR003593">
    <property type="entry name" value="AAA+_ATPase"/>
</dbReference>
<dbReference type="InterPro" id="IPR003439">
    <property type="entry name" value="ABC_transporter-like_ATP-bd"/>
</dbReference>
<dbReference type="InterPro" id="IPR017871">
    <property type="entry name" value="ABC_transporter-like_CS"/>
</dbReference>
<dbReference type="InterPro" id="IPR015856">
    <property type="entry name" value="ABC_transpr_CbiO/EcfA_su"/>
</dbReference>
<dbReference type="InterPro" id="IPR050095">
    <property type="entry name" value="ECF_ABC_transporter_ATP-bd"/>
</dbReference>
<dbReference type="InterPro" id="IPR030947">
    <property type="entry name" value="EcfA_1"/>
</dbReference>
<dbReference type="InterPro" id="IPR027417">
    <property type="entry name" value="P-loop_NTPase"/>
</dbReference>
<dbReference type="NCBIfam" id="TIGR04520">
    <property type="entry name" value="ECF_ATPase_1"/>
    <property type="match status" value="1"/>
</dbReference>
<dbReference type="NCBIfam" id="NF010156">
    <property type="entry name" value="PRK13635.1"/>
    <property type="match status" value="1"/>
</dbReference>
<dbReference type="NCBIfam" id="NF010167">
    <property type="entry name" value="PRK13648.1"/>
    <property type="match status" value="1"/>
</dbReference>
<dbReference type="PANTHER" id="PTHR43553:SF24">
    <property type="entry name" value="ENERGY-COUPLING FACTOR TRANSPORTER ATP-BINDING PROTEIN ECFA1"/>
    <property type="match status" value="1"/>
</dbReference>
<dbReference type="PANTHER" id="PTHR43553">
    <property type="entry name" value="HEAVY METAL TRANSPORTER"/>
    <property type="match status" value="1"/>
</dbReference>
<dbReference type="Pfam" id="PF00005">
    <property type="entry name" value="ABC_tran"/>
    <property type="match status" value="1"/>
</dbReference>
<dbReference type="SMART" id="SM00382">
    <property type="entry name" value="AAA"/>
    <property type="match status" value="1"/>
</dbReference>
<dbReference type="SUPFAM" id="SSF52540">
    <property type="entry name" value="P-loop containing nucleoside triphosphate hydrolases"/>
    <property type="match status" value="1"/>
</dbReference>
<dbReference type="PROSITE" id="PS00211">
    <property type="entry name" value="ABC_TRANSPORTER_1"/>
    <property type="match status" value="1"/>
</dbReference>
<dbReference type="PROSITE" id="PS50893">
    <property type="entry name" value="ABC_TRANSPORTER_2"/>
    <property type="match status" value="1"/>
</dbReference>
<dbReference type="PROSITE" id="PS51246">
    <property type="entry name" value="CBIO"/>
    <property type="match status" value="1"/>
</dbReference>
<accession>Q81J16</accession>
<name>ECFA1_BACCR</name>
<organism>
    <name type="scientific">Bacillus cereus (strain ATCC 14579 / DSM 31 / CCUG 7414 / JCM 2152 / NBRC 15305 / NCIMB 9373 / NCTC 2599 / NRRL B-3711)</name>
    <dbReference type="NCBI Taxonomy" id="226900"/>
    <lineage>
        <taxon>Bacteria</taxon>
        <taxon>Bacillati</taxon>
        <taxon>Bacillota</taxon>
        <taxon>Bacilli</taxon>
        <taxon>Bacillales</taxon>
        <taxon>Bacillaceae</taxon>
        <taxon>Bacillus</taxon>
        <taxon>Bacillus cereus group</taxon>
    </lineage>
</organism>
<protein>
    <recommendedName>
        <fullName evidence="1">Energy-coupling factor transporter ATP-binding protein EcfA1</fullName>
        <shortName evidence="1">ECF transporter A component EcfA1</shortName>
        <ecNumber evidence="1">7.-.-.-</ecNumber>
    </recommendedName>
</protein>
<gene>
    <name evidence="1" type="primary">ecfA1</name>
    <name type="synonym">cbiO1</name>
    <name type="ordered locus">BC_0160</name>
</gene>
<evidence type="ECO:0000255" key="1">
    <source>
        <dbReference type="HAMAP-Rule" id="MF_01710"/>
    </source>
</evidence>